<organism>
    <name type="scientific">Methanosarcina mazei (strain ATCC BAA-159 / DSM 3647 / Goe1 / Go1 / JCM 11833 / OCM 88)</name>
    <name type="common">Methanosarcina frisia</name>
    <dbReference type="NCBI Taxonomy" id="192952"/>
    <lineage>
        <taxon>Archaea</taxon>
        <taxon>Methanobacteriati</taxon>
        <taxon>Methanobacteriota</taxon>
        <taxon>Stenosarchaea group</taxon>
        <taxon>Methanomicrobia</taxon>
        <taxon>Methanosarcinales</taxon>
        <taxon>Methanosarcinaceae</taxon>
        <taxon>Methanosarcina</taxon>
    </lineage>
</organism>
<proteinExistence type="inferred from homology"/>
<sequence>MDPESRRLFNVRKVLKGKKPQFKRTCSHKFKKLDDNWRRPRGSQGKQRRKYAAKGALAQVGYGSPAAVKGLHPSGYSDVLISSIAELELVDPSFEAIRIAGKIGAKKKALIIAKAEEAGIKVLNPGRSE</sequence>
<keyword id="KW-0687">Ribonucleoprotein</keyword>
<keyword id="KW-0689">Ribosomal protein</keyword>
<comment type="similarity">
    <text evidence="1">Belongs to the eukaryotic ribosomal protein eL32 family.</text>
</comment>
<comment type="sequence caution" evidence="1">
    <conflict type="erroneous initiation">
        <sequence resource="EMBL-CDS" id="AAM31837"/>
    </conflict>
</comment>
<gene>
    <name type="primary">rpl32e</name>
    <name type="ordered locus">MM_2141</name>
</gene>
<protein>
    <recommendedName>
        <fullName evidence="1">Large ribosomal subunit protein eL32</fullName>
    </recommendedName>
    <alternativeName>
        <fullName>50S ribosomal protein L32e</fullName>
    </alternativeName>
</protein>
<reference key="1">
    <citation type="journal article" date="2002" name="J. Mol. Microbiol. Biotechnol.">
        <title>The genome of Methanosarcina mazei: evidence for lateral gene transfer between Bacteria and Archaea.</title>
        <authorList>
            <person name="Deppenmeier U."/>
            <person name="Johann A."/>
            <person name="Hartsch T."/>
            <person name="Merkl R."/>
            <person name="Schmitz R.A."/>
            <person name="Martinez-Arias R."/>
            <person name="Henne A."/>
            <person name="Wiezer A."/>
            <person name="Baeumer S."/>
            <person name="Jacobi C."/>
            <person name="Brueggemann H."/>
            <person name="Lienard T."/>
            <person name="Christmann A."/>
            <person name="Boemecke M."/>
            <person name="Steckel S."/>
            <person name="Bhattacharyya A."/>
            <person name="Lykidis A."/>
            <person name="Overbeek R."/>
            <person name="Klenk H.-P."/>
            <person name="Gunsalus R.P."/>
            <person name="Fritz H.-J."/>
            <person name="Gottschalk G."/>
        </authorList>
    </citation>
    <scope>NUCLEOTIDE SEQUENCE [LARGE SCALE GENOMIC DNA]</scope>
    <source>
        <strain>ATCC BAA-159 / DSM 3647 / Goe1 / Go1 / JCM 11833 / OCM 88</strain>
    </source>
</reference>
<evidence type="ECO:0000305" key="1"/>
<accession>Q8PV33</accession>
<feature type="chain" id="PRO_0000131153" description="Large ribosomal subunit protein eL32">
    <location>
        <begin position="1"/>
        <end position="129"/>
    </location>
</feature>
<name>RL32_METMA</name>
<dbReference type="EMBL" id="AE008384">
    <property type="protein sequence ID" value="AAM31837.1"/>
    <property type="status" value="ALT_INIT"/>
    <property type="molecule type" value="Genomic_DNA"/>
</dbReference>
<dbReference type="SMR" id="Q8PV33"/>
<dbReference type="KEGG" id="mma:MM_2141"/>
<dbReference type="PATRIC" id="fig|192952.21.peg.2455"/>
<dbReference type="eggNOG" id="arCOG00781">
    <property type="taxonomic scope" value="Archaea"/>
</dbReference>
<dbReference type="HOGENOM" id="CLU_071479_3_1_2"/>
<dbReference type="Proteomes" id="UP000000595">
    <property type="component" value="Chromosome"/>
</dbReference>
<dbReference type="GO" id="GO:0022625">
    <property type="term" value="C:cytosolic large ribosomal subunit"/>
    <property type="evidence" value="ECO:0007669"/>
    <property type="project" value="TreeGrafter"/>
</dbReference>
<dbReference type="GO" id="GO:0003735">
    <property type="term" value="F:structural constituent of ribosome"/>
    <property type="evidence" value="ECO:0007669"/>
    <property type="project" value="InterPro"/>
</dbReference>
<dbReference type="GO" id="GO:0006412">
    <property type="term" value="P:translation"/>
    <property type="evidence" value="ECO:0007669"/>
    <property type="project" value="UniProtKB-UniRule"/>
</dbReference>
<dbReference type="CDD" id="cd00513">
    <property type="entry name" value="Ribosomal_L32_L32e"/>
    <property type="match status" value="1"/>
</dbReference>
<dbReference type="HAMAP" id="MF_00810">
    <property type="entry name" value="Ribosomal_eL32"/>
    <property type="match status" value="1"/>
</dbReference>
<dbReference type="InterPro" id="IPR001515">
    <property type="entry name" value="Ribosomal_eL32"/>
</dbReference>
<dbReference type="InterPro" id="IPR023654">
    <property type="entry name" value="Ribosomal_eL32_arc"/>
</dbReference>
<dbReference type="InterPro" id="IPR018263">
    <property type="entry name" value="Ribosomal_eL32_CS"/>
</dbReference>
<dbReference type="InterPro" id="IPR036351">
    <property type="entry name" value="Ribosomal_eL32_sf"/>
</dbReference>
<dbReference type="NCBIfam" id="NF006332">
    <property type="entry name" value="PRK08562.1"/>
    <property type="match status" value="1"/>
</dbReference>
<dbReference type="PANTHER" id="PTHR23413">
    <property type="entry name" value="60S RIBOSOMAL PROTEIN L32 AND DNA-DIRECTED RNA POLYMERASE II, SUBUNIT N"/>
    <property type="match status" value="1"/>
</dbReference>
<dbReference type="PANTHER" id="PTHR23413:SF1">
    <property type="entry name" value="RIBOSOMAL PROTEIN L32"/>
    <property type="match status" value="1"/>
</dbReference>
<dbReference type="Pfam" id="PF01655">
    <property type="entry name" value="Ribosomal_L32e"/>
    <property type="match status" value="1"/>
</dbReference>
<dbReference type="SMART" id="SM01393">
    <property type="entry name" value="Ribosomal_L32e"/>
    <property type="match status" value="1"/>
</dbReference>
<dbReference type="SUPFAM" id="SSF52042">
    <property type="entry name" value="Ribosomal protein L32e"/>
    <property type="match status" value="1"/>
</dbReference>
<dbReference type="PROSITE" id="PS00580">
    <property type="entry name" value="RIBOSOMAL_L32E"/>
    <property type="match status" value="1"/>
</dbReference>